<name>HOA_CARHZ</name>
<feature type="chain" id="PRO_0000387811" description="4-hydroxy-2-oxovalerate aldolase">
    <location>
        <begin position="1"/>
        <end position="336"/>
    </location>
</feature>
<feature type="domain" description="Pyruvate carboxyltransferase" evidence="1">
    <location>
        <begin position="5"/>
        <end position="255"/>
    </location>
</feature>
<feature type="active site" description="Proton acceptor" evidence="1">
    <location>
        <position position="17"/>
    </location>
</feature>
<feature type="binding site" evidence="1">
    <location>
        <begin position="13"/>
        <end position="14"/>
    </location>
    <ligand>
        <name>substrate</name>
    </ligand>
</feature>
<feature type="binding site" evidence="1">
    <location>
        <position position="14"/>
    </location>
    <ligand>
        <name>Mn(2+)</name>
        <dbReference type="ChEBI" id="CHEBI:29035"/>
    </ligand>
</feature>
<feature type="binding site" evidence="1">
    <location>
        <position position="167"/>
    </location>
    <ligand>
        <name>substrate</name>
    </ligand>
</feature>
<feature type="binding site" evidence="1">
    <location>
        <position position="194"/>
    </location>
    <ligand>
        <name>Mn(2+)</name>
        <dbReference type="ChEBI" id="CHEBI:29035"/>
    </ligand>
</feature>
<feature type="binding site" evidence="1">
    <location>
        <position position="194"/>
    </location>
    <ligand>
        <name>substrate</name>
    </ligand>
</feature>
<feature type="binding site" evidence="1">
    <location>
        <position position="196"/>
    </location>
    <ligand>
        <name>Mn(2+)</name>
        <dbReference type="ChEBI" id="CHEBI:29035"/>
    </ligand>
</feature>
<feature type="binding site" evidence="1">
    <location>
        <position position="285"/>
    </location>
    <ligand>
        <name>substrate</name>
    </ligand>
</feature>
<feature type="site" description="Transition state stabilizer" evidence="1">
    <location>
        <position position="13"/>
    </location>
</feature>
<keyword id="KW-0058">Aromatic hydrocarbons catabolism</keyword>
<keyword id="KW-0456">Lyase</keyword>
<keyword id="KW-0464">Manganese</keyword>
<keyword id="KW-0479">Metal-binding</keyword>
<keyword id="KW-1185">Reference proteome</keyword>
<gene>
    <name type="primary">mhpE</name>
    <name type="ordered locus">CHY_1280</name>
</gene>
<accession>Q3ACM0</accession>
<organism>
    <name type="scientific">Carboxydothermus hydrogenoformans (strain ATCC BAA-161 / DSM 6008 / Z-2901)</name>
    <dbReference type="NCBI Taxonomy" id="246194"/>
    <lineage>
        <taxon>Bacteria</taxon>
        <taxon>Bacillati</taxon>
        <taxon>Bacillota</taxon>
        <taxon>Clostridia</taxon>
        <taxon>Thermoanaerobacterales</taxon>
        <taxon>Thermoanaerobacteraceae</taxon>
        <taxon>Carboxydothermus</taxon>
    </lineage>
</organism>
<sequence>MAKKIRIIDSTLRDGMHAVSHQFTPEEMAEIAAGLDAAGIDTIEVSHGDGLGGSSYNYGFAAAKDEDYLKAVSQVLKNSKLGVLLLPGIGTAHDLEMAAKFGAKVVRVATHCTEADIGEQHIKIAKELGMEAIGFLMMSHMVPPEKLVEQAKLFESYGADAVYITDSAGAMTPYDVKVRIEAVKAAVSVPVGFHAHNNLGLAIGNTLAAIEAGATYVDGTARGLGAGAGNSQTEILVAVLAKLGYETGVDLYKIMDVAEEVVAPKMRRPQIVDKAALSLGYAGVYGSFLLHAMRAAEKFKVDVRDILIELGRLKTVGGQEDMIVDVAYELSKANKQ</sequence>
<comment type="catalytic activity">
    <reaction evidence="1">
        <text>(S)-4-hydroxy-2-oxopentanoate = acetaldehyde + pyruvate</text>
        <dbReference type="Rhea" id="RHEA:22624"/>
        <dbReference type="ChEBI" id="CHEBI:15343"/>
        <dbReference type="ChEBI" id="CHEBI:15361"/>
        <dbReference type="ChEBI" id="CHEBI:73143"/>
        <dbReference type="EC" id="4.1.3.39"/>
    </reaction>
</comment>
<comment type="similarity">
    <text evidence="1">Belongs to the 4-hydroxy-2-oxovalerate aldolase family.</text>
</comment>
<dbReference type="EC" id="4.1.3.39" evidence="1"/>
<dbReference type="EMBL" id="CP000141">
    <property type="protein sequence ID" value="ABB15464.1"/>
    <property type="molecule type" value="Genomic_DNA"/>
</dbReference>
<dbReference type="RefSeq" id="WP_011344190.1">
    <property type="nucleotide sequence ID" value="NC_007503.1"/>
</dbReference>
<dbReference type="SMR" id="Q3ACM0"/>
<dbReference type="STRING" id="246194.CHY_1280"/>
<dbReference type="KEGG" id="chy:CHY_1280"/>
<dbReference type="eggNOG" id="COG0119">
    <property type="taxonomic scope" value="Bacteria"/>
</dbReference>
<dbReference type="HOGENOM" id="CLU_049173_0_0_9"/>
<dbReference type="InParanoid" id="Q3ACM0"/>
<dbReference type="OrthoDB" id="9804858at2"/>
<dbReference type="Proteomes" id="UP000002706">
    <property type="component" value="Chromosome"/>
</dbReference>
<dbReference type="GO" id="GO:0003852">
    <property type="term" value="F:2-isopropylmalate synthase activity"/>
    <property type="evidence" value="ECO:0007669"/>
    <property type="project" value="TreeGrafter"/>
</dbReference>
<dbReference type="GO" id="GO:0008701">
    <property type="term" value="F:4-hydroxy-2-oxovalerate aldolase activity"/>
    <property type="evidence" value="ECO:0007669"/>
    <property type="project" value="UniProtKB-UniRule"/>
</dbReference>
<dbReference type="GO" id="GO:0030145">
    <property type="term" value="F:manganese ion binding"/>
    <property type="evidence" value="ECO:0007669"/>
    <property type="project" value="UniProtKB-UniRule"/>
</dbReference>
<dbReference type="GO" id="GO:0009056">
    <property type="term" value="P:catabolic process"/>
    <property type="evidence" value="ECO:0007669"/>
    <property type="project" value="UniProtKB-KW"/>
</dbReference>
<dbReference type="GO" id="GO:0009098">
    <property type="term" value="P:L-leucine biosynthetic process"/>
    <property type="evidence" value="ECO:0007669"/>
    <property type="project" value="TreeGrafter"/>
</dbReference>
<dbReference type="CDD" id="cd07943">
    <property type="entry name" value="DRE_TIM_HOA"/>
    <property type="match status" value="1"/>
</dbReference>
<dbReference type="Gene3D" id="1.10.8.60">
    <property type="match status" value="1"/>
</dbReference>
<dbReference type="Gene3D" id="3.20.20.70">
    <property type="entry name" value="Aldolase class I"/>
    <property type="match status" value="1"/>
</dbReference>
<dbReference type="HAMAP" id="MF_01656">
    <property type="entry name" value="HOA"/>
    <property type="match status" value="1"/>
</dbReference>
<dbReference type="InterPro" id="IPR050073">
    <property type="entry name" value="2-IPM_HCS-like"/>
</dbReference>
<dbReference type="InterPro" id="IPR017629">
    <property type="entry name" value="4OH_2_O-val_aldolase"/>
</dbReference>
<dbReference type="InterPro" id="IPR013785">
    <property type="entry name" value="Aldolase_TIM"/>
</dbReference>
<dbReference type="InterPro" id="IPR012425">
    <property type="entry name" value="DmpG_comm"/>
</dbReference>
<dbReference type="InterPro" id="IPR035685">
    <property type="entry name" value="DRE_TIM_HOA"/>
</dbReference>
<dbReference type="InterPro" id="IPR000891">
    <property type="entry name" value="PYR_CT"/>
</dbReference>
<dbReference type="NCBIfam" id="TIGR03217">
    <property type="entry name" value="4OH_2_O_val_ald"/>
    <property type="match status" value="1"/>
</dbReference>
<dbReference type="NCBIfam" id="NF006049">
    <property type="entry name" value="PRK08195.1"/>
    <property type="match status" value="1"/>
</dbReference>
<dbReference type="PANTHER" id="PTHR10277:SF9">
    <property type="entry name" value="2-ISOPROPYLMALATE SYNTHASE 1, CHLOROPLASTIC-RELATED"/>
    <property type="match status" value="1"/>
</dbReference>
<dbReference type="PANTHER" id="PTHR10277">
    <property type="entry name" value="HOMOCITRATE SYNTHASE-RELATED"/>
    <property type="match status" value="1"/>
</dbReference>
<dbReference type="Pfam" id="PF07836">
    <property type="entry name" value="DmpG_comm"/>
    <property type="match status" value="1"/>
</dbReference>
<dbReference type="Pfam" id="PF00682">
    <property type="entry name" value="HMGL-like"/>
    <property type="match status" value="1"/>
</dbReference>
<dbReference type="SUPFAM" id="SSF51569">
    <property type="entry name" value="Aldolase"/>
    <property type="match status" value="1"/>
</dbReference>
<dbReference type="SUPFAM" id="SSF89000">
    <property type="entry name" value="post-HMGL domain-like"/>
    <property type="match status" value="1"/>
</dbReference>
<dbReference type="PROSITE" id="PS50991">
    <property type="entry name" value="PYR_CT"/>
    <property type="match status" value="1"/>
</dbReference>
<evidence type="ECO:0000255" key="1">
    <source>
        <dbReference type="HAMAP-Rule" id="MF_01656"/>
    </source>
</evidence>
<proteinExistence type="inferred from homology"/>
<protein>
    <recommendedName>
        <fullName evidence="1">4-hydroxy-2-oxovalerate aldolase</fullName>
        <shortName evidence="1">HOA</shortName>
        <ecNumber evidence="1">4.1.3.39</ecNumber>
    </recommendedName>
    <alternativeName>
        <fullName evidence="1">4-hydroxy-2-keto-pentanoic acid aldolase</fullName>
    </alternativeName>
    <alternativeName>
        <fullName evidence="1">4-hydroxy-2-oxopentanoate aldolase</fullName>
    </alternativeName>
</protein>
<reference key="1">
    <citation type="journal article" date="2005" name="PLoS Genet.">
        <title>Life in hot carbon monoxide: the complete genome sequence of Carboxydothermus hydrogenoformans Z-2901.</title>
        <authorList>
            <person name="Wu M."/>
            <person name="Ren Q."/>
            <person name="Durkin A.S."/>
            <person name="Daugherty S.C."/>
            <person name="Brinkac L.M."/>
            <person name="Dodson R.J."/>
            <person name="Madupu R."/>
            <person name="Sullivan S.A."/>
            <person name="Kolonay J.F."/>
            <person name="Nelson W.C."/>
            <person name="Tallon L.J."/>
            <person name="Jones K.M."/>
            <person name="Ulrich L.E."/>
            <person name="Gonzalez J.M."/>
            <person name="Zhulin I.B."/>
            <person name="Robb F.T."/>
            <person name="Eisen J.A."/>
        </authorList>
    </citation>
    <scope>NUCLEOTIDE SEQUENCE [LARGE SCALE GENOMIC DNA]</scope>
    <source>
        <strain>ATCC BAA-161 / DSM 6008 / Z-2901</strain>
    </source>
</reference>